<protein>
    <recommendedName>
        <fullName>Polypeptide N-acetylgalactosaminyltransferase 14</fullName>
        <ecNumber>2.4.1.41</ecNumber>
    </recommendedName>
    <alternativeName>
        <fullName>Polypeptide GalNAc transferase 14</fullName>
        <shortName>GalNAc-T14</shortName>
        <shortName>pp-GaNTase 14</shortName>
    </alternativeName>
    <alternativeName>
        <fullName>Protein-UDP acetylgalactosaminyltransferase 14</fullName>
    </alternativeName>
    <alternativeName>
        <fullName>UDP-GalNAc:polypeptide N-acetylgalactosaminyltransferase 14</fullName>
    </alternativeName>
</protein>
<name>GLT14_HUMAN</name>
<evidence type="ECO:0000250" key="1"/>
<evidence type="ECO:0000255" key="2"/>
<evidence type="ECO:0000255" key="3">
    <source>
        <dbReference type="PROSITE-ProRule" id="PRU00174"/>
    </source>
</evidence>
<evidence type="ECO:0000269" key="4">
    <source>
    </source>
</evidence>
<evidence type="ECO:0000269" key="5">
    <source>
    </source>
</evidence>
<evidence type="ECO:0000303" key="6">
    <source>
    </source>
</evidence>
<evidence type="ECO:0000305" key="7"/>
<proteinExistence type="evidence at protein level"/>
<organism>
    <name type="scientific">Homo sapiens</name>
    <name type="common">Human</name>
    <dbReference type="NCBI Taxonomy" id="9606"/>
    <lineage>
        <taxon>Eukaryota</taxon>
        <taxon>Metazoa</taxon>
        <taxon>Chordata</taxon>
        <taxon>Craniata</taxon>
        <taxon>Vertebrata</taxon>
        <taxon>Euteleostomi</taxon>
        <taxon>Mammalia</taxon>
        <taxon>Eutheria</taxon>
        <taxon>Euarchontoglires</taxon>
        <taxon>Primates</taxon>
        <taxon>Haplorrhini</taxon>
        <taxon>Catarrhini</taxon>
        <taxon>Hominidae</taxon>
        <taxon>Homo</taxon>
    </lineage>
</organism>
<reference key="1">
    <citation type="journal article" date="2003" name="Biochem. Biophys. Res. Commun.">
        <title>Cloning and characterization of a novel UDP-GalNAc:polypeptide N-acetylgalactosaminyltransferase, pp-GalNAc-T14.</title>
        <authorList>
            <person name="Wang H."/>
            <person name="Tachibana K."/>
            <person name="Zhang Y."/>
            <person name="Iwasaki H."/>
            <person name="Kameyama A."/>
            <person name="Chen L."/>
            <person name="Guo J.-M."/>
            <person name="Hiruma T."/>
            <person name="Togayachi A."/>
            <person name="Kudo T."/>
            <person name="Kikuchi N."/>
            <person name="Narimatsu H."/>
        </authorList>
    </citation>
    <scope>NUCLEOTIDE SEQUENCE [MRNA] (ISOFORM 1)</scope>
    <scope>ENZYME ACTIVITY</scope>
    <scope>ALTERNATIVE SPLICING</scope>
    <scope>TISSUE SPECIFICITY</scope>
    <source>
        <tissue>Stomach</tissue>
    </source>
</reference>
<reference key="2">
    <citation type="submission" date="2011-09" db="EMBL/GenBank/DDBJ databases">
        <authorList>
            <person name="Wandall H.H."/>
            <person name="Bennett E.P."/>
        </authorList>
    </citation>
    <scope>NUCLEOTIDE SEQUENCE [MRNA] (ISOFORM 1)</scope>
</reference>
<reference key="3">
    <citation type="journal article" date="2003" name="Genome Res.">
        <title>The secreted protein discovery initiative (SPDI), a large-scale effort to identify novel human secreted and transmembrane proteins: a bioinformatics assessment.</title>
        <authorList>
            <person name="Clark H.F."/>
            <person name="Gurney A.L."/>
            <person name="Abaya E."/>
            <person name="Baker K."/>
            <person name="Baldwin D.T."/>
            <person name="Brush J."/>
            <person name="Chen J."/>
            <person name="Chow B."/>
            <person name="Chui C."/>
            <person name="Crowley C."/>
            <person name="Currell B."/>
            <person name="Deuel B."/>
            <person name="Dowd P."/>
            <person name="Eaton D."/>
            <person name="Foster J.S."/>
            <person name="Grimaldi C."/>
            <person name="Gu Q."/>
            <person name="Hass P.E."/>
            <person name="Heldens S."/>
            <person name="Huang A."/>
            <person name="Kim H.S."/>
            <person name="Klimowski L."/>
            <person name="Jin Y."/>
            <person name="Johnson S."/>
            <person name="Lee J."/>
            <person name="Lewis L."/>
            <person name="Liao D."/>
            <person name="Mark M.R."/>
            <person name="Robbie E."/>
            <person name="Sanchez C."/>
            <person name="Schoenfeld J."/>
            <person name="Seshagiri S."/>
            <person name="Simmons L."/>
            <person name="Singh J."/>
            <person name="Smith V."/>
            <person name="Stinson J."/>
            <person name="Vagts A."/>
            <person name="Vandlen R.L."/>
            <person name="Watanabe C."/>
            <person name="Wieand D."/>
            <person name="Woods K."/>
            <person name="Xie M.-H."/>
            <person name="Yansura D.G."/>
            <person name="Yi S."/>
            <person name="Yu G."/>
            <person name="Yuan J."/>
            <person name="Zhang M."/>
            <person name="Zhang Z."/>
            <person name="Goddard A.D."/>
            <person name="Wood W.I."/>
            <person name="Godowski P.J."/>
            <person name="Gray A.M."/>
        </authorList>
    </citation>
    <scope>NUCLEOTIDE SEQUENCE [LARGE SCALE MRNA] (ISOFORM 1)</scope>
</reference>
<reference key="4">
    <citation type="journal article" date="2004" name="Nat. Genet.">
        <title>Complete sequencing and characterization of 21,243 full-length human cDNAs.</title>
        <authorList>
            <person name="Ota T."/>
            <person name="Suzuki Y."/>
            <person name="Nishikawa T."/>
            <person name="Otsuki T."/>
            <person name="Sugiyama T."/>
            <person name="Irie R."/>
            <person name="Wakamatsu A."/>
            <person name="Hayashi K."/>
            <person name="Sato H."/>
            <person name="Nagai K."/>
            <person name="Kimura K."/>
            <person name="Makita H."/>
            <person name="Sekine M."/>
            <person name="Obayashi M."/>
            <person name="Nishi T."/>
            <person name="Shibahara T."/>
            <person name="Tanaka T."/>
            <person name="Ishii S."/>
            <person name="Yamamoto J."/>
            <person name="Saito K."/>
            <person name="Kawai Y."/>
            <person name="Isono Y."/>
            <person name="Nakamura Y."/>
            <person name="Nagahari K."/>
            <person name="Murakami K."/>
            <person name="Yasuda T."/>
            <person name="Iwayanagi T."/>
            <person name="Wagatsuma M."/>
            <person name="Shiratori A."/>
            <person name="Sudo H."/>
            <person name="Hosoiri T."/>
            <person name="Kaku Y."/>
            <person name="Kodaira H."/>
            <person name="Kondo H."/>
            <person name="Sugawara M."/>
            <person name="Takahashi M."/>
            <person name="Kanda K."/>
            <person name="Yokoi T."/>
            <person name="Furuya T."/>
            <person name="Kikkawa E."/>
            <person name="Omura Y."/>
            <person name="Abe K."/>
            <person name="Kamihara K."/>
            <person name="Katsuta N."/>
            <person name="Sato K."/>
            <person name="Tanikawa M."/>
            <person name="Yamazaki M."/>
            <person name="Ninomiya K."/>
            <person name="Ishibashi T."/>
            <person name="Yamashita H."/>
            <person name="Murakawa K."/>
            <person name="Fujimori K."/>
            <person name="Tanai H."/>
            <person name="Kimata M."/>
            <person name="Watanabe M."/>
            <person name="Hiraoka S."/>
            <person name="Chiba Y."/>
            <person name="Ishida S."/>
            <person name="Ono Y."/>
            <person name="Takiguchi S."/>
            <person name="Watanabe S."/>
            <person name="Yosida M."/>
            <person name="Hotuta T."/>
            <person name="Kusano J."/>
            <person name="Kanehori K."/>
            <person name="Takahashi-Fujii A."/>
            <person name="Hara H."/>
            <person name="Tanase T.-O."/>
            <person name="Nomura Y."/>
            <person name="Togiya S."/>
            <person name="Komai F."/>
            <person name="Hara R."/>
            <person name="Takeuchi K."/>
            <person name="Arita M."/>
            <person name="Imose N."/>
            <person name="Musashino K."/>
            <person name="Yuuki H."/>
            <person name="Oshima A."/>
            <person name="Sasaki N."/>
            <person name="Aotsuka S."/>
            <person name="Yoshikawa Y."/>
            <person name="Matsunawa H."/>
            <person name="Ichihara T."/>
            <person name="Shiohata N."/>
            <person name="Sano S."/>
            <person name="Moriya S."/>
            <person name="Momiyama H."/>
            <person name="Satoh N."/>
            <person name="Takami S."/>
            <person name="Terashima Y."/>
            <person name="Suzuki O."/>
            <person name="Nakagawa S."/>
            <person name="Senoh A."/>
            <person name="Mizoguchi H."/>
            <person name="Goto Y."/>
            <person name="Shimizu F."/>
            <person name="Wakebe H."/>
            <person name="Hishigaki H."/>
            <person name="Watanabe T."/>
            <person name="Sugiyama A."/>
            <person name="Takemoto M."/>
            <person name="Kawakami B."/>
            <person name="Yamazaki M."/>
            <person name="Watanabe K."/>
            <person name="Kumagai A."/>
            <person name="Itakura S."/>
            <person name="Fukuzumi Y."/>
            <person name="Fujimori Y."/>
            <person name="Komiyama M."/>
            <person name="Tashiro H."/>
            <person name="Tanigami A."/>
            <person name="Fujiwara T."/>
            <person name="Ono T."/>
            <person name="Yamada K."/>
            <person name="Fujii Y."/>
            <person name="Ozaki K."/>
            <person name="Hirao M."/>
            <person name="Ohmori Y."/>
            <person name="Kawabata A."/>
            <person name="Hikiji T."/>
            <person name="Kobatake N."/>
            <person name="Inagaki H."/>
            <person name="Ikema Y."/>
            <person name="Okamoto S."/>
            <person name="Okitani R."/>
            <person name="Kawakami T."/>
            <person name="Noguchi S."/>
            <person name="Itoh T."/>
            <person name="Shigeta K."/>
            <person name="Senba T."/>
            <person name="Matsumura K."/>
            <person name="Nakajima Y."/>
            <person name="Mizuno T."/>
            <person name="Morinaga M."/>
            <person name="Sasaki M."/>
            <person name="Togashi T."/>
            <person name="Oyama M."/>
            <person name="Hata H."/>
            <person name="Watanabe M."/>
            <person name="Komatsu T."/>
            <person name="Mizushima-Sugano J."/>
            <person name="Satoh T."/>
            <person name="Shirai Y."/>
            <person name="Takahashi Y."/>
            <person name="Nakagawa K."/>
            <person name="Okumura K."/>
            <person name="Nagase T."/>
            <person name="Nomura N."/>
            <person name="Kikuchi H."/>
            <person name="Masuho Y."/>
            <person name="Yamashita R."/>
            <person name="Nakai K."/>
            <person name="Yada T."/>
            <person name="Nakamura Y."/>
            <person name="Ohara O."/>
            <person name="Isogai T."/>
            <person name="Sugano S."/>
        </authorList>
    </citation>
    <scope>NUCLEOTIDE SEQUENCE [LARGE SCALE MRNA] (ISOFORMS 1; 3 AND 4)</scope>
    <scope>NUCLEOTIDE SEQUENCE [LARGE SCALE MRNA] OF 1-435 (ISOFORM 2)</scope>
    <source>
        <tissue>Fibroblast</tissue>
        <tissue>Retinoblastoma</tissue>
        <tissue>Teratocarcinoma</tissue>
    </source>
</reference>
<reference key="5">
    <citation type="journal article" date="2005" name="Nature">
        <title>Generation and annotation of the DNA sequences of human chromosomes 2 and 4.</title>
        <authorList>
            <person name="Hillier L.W."/>
            <person name="Graves T.A."/>
            <person name="Fulton R.S."/>
            <person name="Fulton L.A."/>
            <person name="Pepin K.H."/>
            <person name="Minx P."/>
            <person name="Wagner-McPherson C."/>
            <person name="Layman D."/>
            <person name="Wylie K."/>
            <person name="Sekhon M."/>
            <person name="Becker M.C."/>
            <person name="Fewell G.A."/>
            <person name="Delehaunty K.D."/>
            <person name="Miner T.L."/>
            <person name="Nash W.E."/>
            <person name="Kremitzki C."/>
            <person name="Oddy L."/>
            <person name="Du H."/>
            <person name="Sun H."/>
            <person name="Bradshaw-Cordum H."/>
            <person name="Ali J."/>
            <person name="Carter J."/>
            <person name="Cordes M."/>
            <person name="Harris A."/>
            <person name="Isak A."/>
            <person name="van Brunt A."/>
            <person name="Nguyen C."/>
            <person name="Du F."/>
            <person name="Courtney L."/>
            <person name="Kalicki J."/>
            <person name="Ozersky P."/>
            <person name="Abbott S."/>
            <person name="Armstrong J."/>
            <person name="Belter E.A."/>
            <person name="Caruso L."/>
            <person name="Cedroni M."/>
            <person name="Cotton M."/>
            <person name="Davidson T."/>
            <person name="Desai A."/>
            <person name="Elliott G."/>
            <person name="Erb T."/>
            <person name="Fronick C."/>
            <person name="Gaige T."/>
            <person name="Haakenson W."/>
            <person name="Haglund K."/>
            <person name="Holmes A."/>
            <person name="Harkins R."/>
            <person name="Kim K."/>
            <person name="Kruchowski S.S."/>
            <person name="Strong C.M."/>
            <person name="Grewal N."/>
            <person name="Goyea E."/>
            <person name="Hou S."/>
            <person name="Levy A."/>
            <person name="Martinka S."/>
            <person name="Mead K."/>
            <person name="McLellan M.D."/>
            <person name="Meyer R."/>
            <person name="Randall-Maher J."/>
            <person name="Tomlinson C."/>
            <person name="Dauphin-Kohlberg S."/>
            <person name="Kozlowicz-Reilly A."/>
            <person name="Shah N."/>
            <person name="Swearengen-Shahid S."/>
            <person name="Snider J."/>
            <person name="Strong J.T."/>
            <person name="Thompson J."/>
            <person name="Yoakum M."/>
            <person name="Leonard S."/>
            <person name="Pearman C."/>
            <person name="Trani L."/>
            <person name="Radionenko M."/>
            <person name="Waligorski J.E."/>
            <person name="Wang C."/>
            <person name="Rock S.M."/>
            <person name="Tin-Wollam A.-M."/>
            <person name="Maupin R."/>
            <person name="Latreille P."/>
            <person name="Wendl M.C."/>
            <person name="Yang S.-P."/>
            <person name="Pohl C."/>
            <person name="Wallis J.W."/>
            <person name="Spieth J."/>
            <person name="Bieri T.A."/>
            <person name="Berkowicz N."/>
            <person name="Nelson J.O."/>
            <person name="Osborne J."/>
            <person name="Ding L."/>
            <person name="Meyer R."/>
            <person name="Sabo A."/>
            <person name="Shotland Y."/>
            <person name="Sinha P."/>
            <person name="Wohldmann P.E."/>
            <person name="Cook L.L."/>
            <person name="Hickenbotham M.T."/>
            <person name="Eldred J."/>
            <person name="Williams D."/>
            <person name="Jones T.A."/>
            <person name="She X."/>
            <person name="Ciccarelli F.D."/>
            <person name="Izaurralde E."/>
            <person name="Taylor J."/>
            <person name="Schmutz J."/>
            <person name="Myers R.M."/>
            <person name="Cox D.R."/>
            <person name="Huang X."/>
            <person name="McPherson J.D."/>
            <person name="Mardis E.R."/>
            <person name="Clifton S.W."/>
            <person name="Warren W.C."/>
            <person name="Chinwalla A.T."/>
            <person name="Eddy S.R."/>
            <person name="Marra M.A."/>
            <person name="Ovcharenko I."/>
            <person name="Furey T.S."/>
            <person name="Miller W."/>
            <person name="Eichler E.E."/>
            <person name="Bork P."/>
            <person name="Suyama M."/>
            <person name="Torrents D."/>
            <person name="Waterston R.H."/>
            <person name="Wilson R.K."/>
        </authorList>
    </citation>
    <scope>NUCLEOTIDE SEQUENCE [LARGE SCALE GENOMIC DNA]</scope>
</reference>
<reference key="6">
    <citation type="submission" date="2005-07" db="EMBL/GenBank/DDBJ databases">
        <authorList>
            <person name="Mural R.J."/>
            <person name="Istrail S."/>
            <person name="Sutton G.G."/>
            <person name="Florea L."/>
            <person name="Halpern A.L."/>
            <person name="Mobarry C.M."/>
            <person name="Lippert R."/>
            <person name="Walenz B."/>
            <person name="Shatkay H."/>
            <person name="Dew I."/>
            <person name="Miller J.R."/>
            <person name="Flanigan M.J."/>
            <person name="Edwards N.J."/>
            <person name="Bolanos R."/>
            <person name="Fasulo D."/>
            <person name="Halldorsson B.V."/>
            <person name="Hannenhalli S."/>
            <person name="Turner R."/>
            <person name="Yooseph S."/>
            <person name="Lu F."/>
            <person name="Nusskern D.R."/>
            <person name="Shue B.C."/>
            <person name="Zheng X.H."/>
            <person name="Zhong F."/>
            <person name="Delcher A.L."/>
            <person name="Huson D.H."/>
            <person name="Kravitz S.A."/>
            <person name="Mouchard L."/>
            <person name="Reinert K."/>
            <person name="Remington K.A."/>
            <person name="Clark A.G."/>
            <person name="Waterman M.S."/>
            <person name="Eichler E.E."/>
            <person name="Adams M.D."/>
            <person name="Hunkapiller M.W."/>
            <person name="Myers E.W."/>
            <person name="Venter J.C."/>
        </authorList>
    </citation>
    <scope>NUCLEOTIDE SEQUENCE [LARGE SCALE GENOMIC DNA]</scope>
</reference>
<reference key="7">
    <citation type="journal article" date="2004" name="Genome Res.">
        <title>The status, quality, and expansion of the NIH full-length cDNA project: the Mammalian Gene Collection (MGC).</title>
        <authorList>
            <consortium name="The MGC Project Team"/>
        </authorList>
    </citation>
    <scope>NUCLEOTIDE SEQUENCE [LARGE SCALE MRNA] (ISOFORM 1)</scope>
    <source>
        <tissue>Eye</tissue>
        <tissue>Ovary</tissue>
    </source>
</reference>
<reference key="8">
    <citation type="journal article" date="2010" name="Clin. Cancer Res.">
        <title>Development of immunohistochemistry assays to assess GALNT14 and FUT3/6 in clinical trials of dulanermin and drozitumab.</title>
        <authorList>
            <person name="Stern H.M."/>
            <person name="Padilla M."/>
            <person name="Wagner K."/>
            <person name="Amler L."/>
            <person name="Ashkenazi A."/>
        </authorList>
    </citation>
    <scope>TISSUE SPECIFICITY</scope>
</reference>
<dbReference type="EC" id="2.4.1.41"/>
<dbReference type="EMBL" id="AB078144">
    <property type="protein sequence ID" value="BAC56889.1"/>
    <property type="molecule type" value="mRNA"/>
</dbReference>
<dbReference type="EMBL" id="Y09324">
    <property type="protein sequence ID" value="CAA70505.4"/>
    <property type="molecule type" value="mRNA"/>
</dbReference>
<dbReference type="EMBL" id="AY358758">
    <property type="protein sequence ID" value="AAQ89118.1"/>
    <property type="molecule type" value="mRNA"/>
</dbReference>
<dbReference type="EMBL" id="AK022753">
    <property type="protein sequence ID" value="BAB14227.1"/>
    <property type="molecule type" value="mRNA"/>
</dbReference>
<dbReference type="EMBL" id="AK024039">
    <property type="protein sequence ID" value="BAB14795.1"/>
    <property type="status" value="ALT_SEQ"/>
    <property type="molecule type" value="mRNA"/>
</dbReference>
<dbReference type="EMBL" id="AK091313">
    <property type="protein sequence ID" value="BAC03634.1"/>
    <property type="molecule type" value="mRNA"/>
</dbReference>
<dbReference type="EMBL" id="AK122747">
    <property type="protein sequence ID" value="BAG53701.1"/>
    <property type="molecule type" value="mRNA"/>
</dbReference>
<dbReference type="EMBL" id="AC009301">
    <property type="protein sequence ID" value="AAX88899.1"/>
    <property type="molecule type" value="Genomic_DNA"/>
</dbReference>
<dbReference type="EMBL" id="AC009305">
    <property type="protein sequence ID" value="AAX93209.1"/>
    <property type="molecule type" value="Genomic_DNA"/>
</dbReference>
<dbReference type="EMBL" id="AC015980">
    <property type="protein sequence ID" value="AAY24301.1"/>
    <property type="molecule type" value="Genomic_DNA"/>
</dbReference>
<dbReference type="EMBL" id="CH471053">
    <property type="protein sequence ID" value="EAX00489.1"/>
    <property type="molecule type" value="Genomic_DNA"/>
</dbReference>
<dbReference type="EMBL" id="BC006269">
    <property type="protein sequence ID" value="AAH06269.2"/>
    <property type="molecule type" value="mRNA"/>
</dbReference>
<dbReference type="EMBL" id="BC010659">
    <property type="protein sequence ID" value="AAH10659.1"/>
    <property type="molecule type" value="mRNA"/>
</dbReference>
<dbReference type="CCDS" id="CCDS1773.2">
    <molecule id="Q96FL9-1"/>
</dbReference>
<dbReference type="CCDS" id="CCDS58705.1">
    <molecule id="Q96FL9-4"/>
</dbReference>
<dbReference type="CCDS" id="CCDS58706.1">
    <molecule id="Q96FL9-3"/>
</dbReference>
<dbReference type="RefSeq" id="NP_001240755.1">
    <molecule id="Q96FL9-3"/>
    <property type="nucleotide sequence ID" value="NM_001253826.2"/>
</dbReference>
<dbReference type="RefSeq" id="NP_001240756.1">
    <molecule id="Q96FL9-4"/>
    <property type="nucleotide sequence ID" value="NM_001253827.2"/>
</dbReference>
<dbReference type="RefSeq" id="NP_001316024.1">
    <property type="nucleotide sequence ID" value="NM_001329095.1"/>
</dbReference>
<dbReference type="RefSeq" id="NP_001316025.1">
    <molecule id="Q96FL9-4"/>
    <property type="nucleotide sequence ID" value="NM_001329096.2"/>
</dbReference>
<dbReference type="RefSeq" id="NP_078848.2">
    <molecule id="Q96FL9-1"/>
    <property type="nucleotide sequence ID" value="NM_024572.4"/>
</dbReference>
<dbReference type="RefSeq" id="XP_047301783.1">
    <molecule id="Q96FL9-4"/>
    <property type="nucleotide sequence ID" value="XM_047445827.1"/>
</dbReference>
<dbReference type="RefSeq" id="XP_054199882.1">
    <molecule id="Q96FL9-4"/>
    <property type="nucleotide sequence ID" value="XM_054343907.1"/>
</dbReference>
<dbReference type="SMR" id="Q96FL9"/>
<dbReference type="BioGRID" id="122753">
    <property type="interactions" value="49"/>
</dbReference>
<dbReference type="FunCoup" id="Q96FL9">
    <property type="interactions" value="300"/>
</dbReference>
<dbReference type="IntAct" id="Q96FL9">
    <property type="interactions" value="14"/>
</dbReference>
<dbReference type="STRING" id="9606.ENSP00000314500"/>
<dbReference type="BindingDB" id="Q96FL9"/>
<dbReference type="ChEMBL" id="CHEMBL4523427"/>
<dbReference type="CAZy" id="CBM13">
    <property type="family name" value="Carbohydrate-Binding Module Family 13"/>
</dbReference>
<dbReference type="CAZy" id="GT27">
    <property type="family name" value="Glycosyltransferase Family 27"/>
</dbReference>
<dbReference type="GlyCosmos" id="Q96FL9">
    <property type="glycosylation" value="3 sites, 3 glycans"/>
</dbReference>
<dbReference type="GlyGen" id="Q96FL9">
    <property type="glycosylation" value="3 sites, 3 O-linked glycans (3 sites)"/>
</dbReference>
<dbReference type="iPTMnet" id="Q96FL9"/>
<dbReference type="PhosphoSitePlus" id="Q96FL9"/>
<dbReference type="BioMuta" id="GALNT14"/>
<dbReference type="DMDM" id="51316071"/>
<dbReference type="jPOST" id="Q96FL9"/>
<dbReference type="MassIVE" id="Q96FL9"/>
<dbReference type="PeptideAtlas" id="Q96FL9"/>
<dbReference type="ProteomicsDB" id="3748"/>
<dbReference type="ProteomicsDB" id="76541">
    <molecule id="Q96FL9-1"/>
</dbReference>
<dbReference type="ProteomicsDB" id="76542">
    <molecule id="Q96FL9-2"/>
</dbReference>
<dbReference type="ProteomicsDB" id="76543">
    <molecule id="Q96FL9-3"/>
</dbReference>
<dbReference type="Pumba" id="Q96FL9"/>
<dbReference type="Antibodypedia" id="2530">
    <property type="antibodies" value="222 antibodies from 24 providers"/>
</dbReference>
<dbReference type="DNASU" id="79623"/>
<dbReference type="Ensembl" id="ENST00000324589.9">
    <molecule id="Q96FL9-3"/>
    <property type="protein sequence ID" value="ENSP00000314500.5"/>
    <property type="gene ID" value="ENSG00000158089.15"/>
</dbReference>
<dbReference type="Ensembl" id="ENST00000349752.10">
    <molecule id="Q96FL9-1"/>
    <property type="protein sequence ID" value="ENSP00000288988.6"/>
    <property type="gene ID" value="ENSG00000158089.15"/>
</dbReference>
<dbReference type="Ensembl" id="ENST00000406653.5">
    <molecule id="Q96FL9-4"/>
    <property type="protein sequence ID" value="ENSP00000385435.1"/>
    <property type="gene ID" value="ENSG00000158089.15"/>
</dbReference>
<dbReference type="GeneID" id="79623"/>
<dbReference type="KEGG" id="hsa:79623"/>
<dbReference type="MANE-Select" id="ENST00000349752.10">
    <property type="protein sequence ID" value="ENSP00000288988.6"/>
    <property type="RefSeq nucleotide sequence ID" value="NM_024572.4"/>
    <property type="RefSeq protein sequence ID" value="NP_078848.2"/>
</dbReference>
<dbReference type="UCSC" id="uc002rnq.4">
    <molecule id="Q96FL9-1"/>
    <property type="organism name" value="human"/>
</dbReference>
<dbReference type="AGR" id="HGNC:22946"/>
<dbReference type="CTD" id="79623"/>
<dbReference type="DisGeNET" id="79623"/>
<dbReference type="GeneCards" id="GALNT14"/>
<dbReference type="HGNC" id="HGNC:22946">
    <property type="gene designation" value="GALNT14"/>
</dbReference>
<dbReference type="HPA" id="ENSG00000158089">
    <property type="expression patterns" value="Tissue enhanced (kidney)"/>
</dbReference>
<dbReference type="MIM" id="608225">
    <property type="type" value="gene"/>
</dbReference>
<dbReference type="neXtProt" id="NX_Q96FL9"/>
<dbReference type="OpenTargets" id="ENSG00000158089"/>
<dbReference type="PharmGKB" id="PA134920089"/>
<dbReference type="VEuPathDB" id="HostDB:ENSG00000158089"/>
<dbReference type="GeneTree" id="ENSGT00940000158182"/>
<dbReference type="HOGENOM" id="CLU_013477_0_2_1"/>
<dbReference type="InParanoid" id="Q96FL9"/>
<dbReference type="OMA" id="VAQEWTY"/>
<dbReference type="OrthoDB" id="429263at2759"/>
<dbReference type="PAN-GO" id="Q96FL9">
    <property type="GO annotations" value="3 GO annotations based on evolutionary models"/>
</dbReference>
<dbReference type="PhylomeDB" id="Q96FL9"/>
<dbReference type="TreeFam" id="TF313267"/>
<dbReference type="BRENDA" id="2.4.1.41">
    <property type="organism ID" value="2681"/>
</dbReference>
<dbReference type="PathwayCommons" id="Q96FL9"/>
<dbReference type="Reactome" id="R-HSA-913709">
    <property type="pathway name" value="O-linked glycosylation of mucins"/>
</dbReference>
<dbReference type="SignaLink" id="Q96FL9"/>
<dbReference type="UniPathway" id="UPA00378"/>
<dbReference type="BioGRID-ORCS" id="79623">
    <property type="hits" value="7 hits in 1135 CRISPR screens"/>
</dbReference>
<dbReference type="ChiTaRS" id="GALNT14">
    <property type="organism name" value="human"/>
</dbReference>
<dbReference type="GeneWiki" id="GALNT14"/>
<dbReference type="GenomeRNAi" id="79623"/>
<dbReference type="Pharos" id="Q96FL9">
    <property type="development level" value="Tchem"/>
</dbReference>
<dbReference type="PRO" id="PR:Q96FL9"/>
<dbReference type="Proteomes" id="UP000005640">
    <property type="component" value="Chromosome 2"/>
</dbReference>
<dbReference type="RNAct" id="Q96FL9">
    <property type="molecule type" value="protein"/>
</dbReference>
<dbReference type="Bgee" id="ENSG00000158089">
    <property type="expression patterns" value="Expressed in lower esophagus mucosa and 128 other cell types or tissues"/>
</dbReference>
<dbReference type="ExpressionAtlas" id="Q96FL9">
    <property type="expression patterns" value="baseline and differential"/>
</dbReference>
<dbReference type="GO" id="GO:0005794">
    <property type="term" value="C:Golgi apparatus"/>
    <property type="evidence" value="ECO:0000318"/>
    <property type="project" value="GO_Central"/>
</dbReference>
<dbReference type="GO" id="GO:0000139">
    <property type="term" value="C:Golgi membrane"/>
    <property type="evidence" value="ECO:0000304"/>
    <property type="project" value="Reactome"/>
</dbReference>
<dbReference type="GO" id="GO:0030246">
    <property type="term" value="F:carbohydrate binding"/>
    <property type="evidence" value="ECO:0007669"/>
    <property type="project" value="UniProtKB-KW"/>
</dbReference>
<dbReference type="GO" id="GO:0046872">
    <property type="term" value="F:metal ion binding"/>
    <property type="evidence" value="ECO:0007669"/>
    <property type="project" value="UniProtKB-KW"/>
</dbReference>
<dbReference type="GO" id="GO:0004653">
    <property type="term" value="F:polypeptide N-acetylgalactosaminyltransferase activity"/>
    <property type="evidence" value="ECO:0000318"/>
    <property type="project" value="GO_Central"/>
</dbReference>
<dbReference type="GO" id="GO:0016266">
    <property type="term" value="P:O-glycan processing"/>
    <property type="evidence" value="ECO:0000304"/>
    <property type="project" value="Reactome"/>
</dbReference>
<dbReference type="GO" id="GO:0006493">
    <property type="term" value="P:protein O-linked glycosylation"/>
    <property type="evidence" value="ECO:0000318"/>
    <property type="project" value="GO_Central"/>
</dbReference>
<dbReference type="CDD" id="cd23478">
    <property type="entry name" value="beta-trefoil_Ricin_GALNT14"/>
    <property type="match status" value="1"/>
</dbReference>
<dbReference type="CDD" id="cd02510">
    <property type="entry name" value="pp-GalNAc-T"/>
    <property type="match status" value="1"/>
</dbReference>
<dbReference type="FunFam" id="2.80.10.50:FF:000036">
    <property type="entry name" value="Polypeptide N-acetylgalactosaminyltransferase"/>
    <property type="match status" value="1"/>
</dbReference>
<dbReference type="FunFam" id="3.90.550.10:FF:000020">
    <property type="entry name" value="Polypeptide N-acetylgalactosaminyltransferase"/>
    <property type="match status" value="1"/>
</dbReference>
<dbReference type="Gene3D" id="2.80.10.50">
    <property type="match status" value="1"/>
</dbReference>
<dbReference type="Gene3D" id="3.90.550.10">
    <property type="entry name" value="Spore Coat Polysaccharide Biosynthesis Protein SpsA, Chain A"/>
    <property type="match status" value="1"/>
</dbReference>
<dbReference type="InterPro" id="IPR045885">
    <property type="entry name" value="GalNAc-T"/>
</dbReference>
<dbReference type="InterPro" id="IPR001173">
    <property type="entry name" value="Glyco_trans_2-like"/>
</dbReference>
<dbReference type="InterPro" id="IPR029044">
    <property type="entry name" value="Nucleotide-diphossugar_trans"/>
</dbReference>
<dbReference type="InterPro" id="IPR035992">
    <property type="entry name" value="Ricin_B-like_lectins"/>
</dbReference>
<dbReference type="InterPro" id="IPR000772">
    <property type="entry name" value="Ricin_B_lectin"/>
</dbReference>
<dbReference type="PANTHER" id="PTHR11675">
    <property type="entry name" value="N-ACETYLGALACTOSAMINYLTRANSFERASE"/>
    <property type="match status" value="1"/>
</dbReference>
<dbReference type="PANTHER" id="PTHR11675:SF8">
    <property type="entry name" value="POLYPEPTIDE N-ACETYLGALACTOSAMINYLTRANSFERASE 14"/>
    <property type="match status" value="1"/>
</dbReference>
<dbReference type="Pfam" id="PF00535">
    <property type="entry name" value="Glycos_transf_2"/>
    <property type="match status" value="1"/>
</dbReference>
<dbReference type="Pfam" id="PF00652">
    <property type="entry name" value="Ricin_B_lectin"/>
    <property type="match status" value="1"/>
</dbReference>
<dbReference type="SMART" id="SM00458">
    <property type="entry name" value="RICIN"/>
    <property type="match status" value="1"/>
</dbReference>
<dbReference type="SUPFAM" id="SSF53448">
    <property type="entry name" value="Nucleotide-diphospho-sugar transferases"/>
    <property type="match status" value="1"/>
</dbReference>
<dbReference type="SUPFAM" id="SSF50370">
    <property type="entry name" value="Ricin B-like lectins"/>
    <property type="match status" value="1"/>
</dbReference>
<dbReference type="PROSITE" id="PS50231">
    <property type="entry name" value="RICIN_B_LECTIN"/>
    <property type="match status" value="1"/>
</dbReference>
<accession>Q96FL9</accession>
<accession>B3KV89</accession>
<accession>Q4ZG75</accession>
<accession>Q53SU1</accession>
<accession>Q53TJ0</accession>
<accession>Q8IVI4</accession>
<accession>Q9BRH1</accession>
<accession>Q9H827</accession>
<accession>Q9H9J8</accession>
<comment type="function">
    <text>Catalyzes the initial reaction in O-linked oligosaccharide biosynthesis, the transfer of an N-acetyl-D-galactosamine residue to a serine or threonine residue on the protein receptor. Displays activity toward mucin-derived peptide substrates such as Muc2, Muc5AC, Muc7, and Muc13 (-58). May be involved in O-glycosylation in kidney.</text>
</comment>
<comment type="catalytic activity">
    <reaction evidence="4">
        <text>L-seryl-[protein] + UDP-N-acetyl-alpha-D-galactosamine = a 3-O-[N-acetyl-alpha-D-galactosaminyl]-L-seryl-[protein] + UDP + H(+)</text>
        <dbReference type="Rhea" id="RHEA:23956"/>
        <dbReference type="Rhea" id="RHEA-COMP:9863"/>
        <dbReference type="Rhea" id="RHEA-COMP:12788"/>
        <dbReference type="ChEBI" id="CHEBI:15378"/>
        <dbReference type="ChEBI" id="CHEBI:29999"/>
        <dbReference type="ChEBI" id="CHEBI:53604"/>
        <dbReference type="ChEBI" id="CHEBI:58223"/>
        <dbReference type="ChEBI" id="CHEBI:67138"/>
        <dbReference type="EC" id="2.4.1.41"/>
    </reaction>
</comment>
<comment type="catalytic activity">
    <reaction evidence="4">
        <text>L-threonyl-[protein] + UDP-N-acetyl-alpha-D-galactosamine = a 3-O-[N-acetyl-alpha-D-galactosaminyl]-L-threonyl-[protein] + UDP + H(+)</text>
        <dbReference type="Rhea" id="RHEA:52424"/>
        <dbReference type="Rhea" id="RHEA-COMP:11060"/>
        <dbReference type="Rhea" id="RHEA-COMP:11689"/>
        <dbReference type="ChEBI" id="CHEBI:15378"/>
        <dbReference type="ChEBI" id="CHEBI:30013"/>
        <dbReference type="ChEBI" id="CHEBI:58223"/>
        <dbReference type="ChEBI" id="CHEBI:67138"/>
        <dbReference type="ChEBI" id="CHEBI:87075"/>
        <dbReference type="EC" id="2.4.1.41"/>
    </reaction>
</comment>
<comment type="cofactor">
    <cofactor evidence="1">
        <name>Mn(2+)</name>
        <dbReference type="ChEBI" id="CHEBI:29035"/>
    </cofactor>
</comment>
<comment type="pathway">
    <text>Protein modification; protein glycosylation.</text>
</comment>
<comment type="subcellular location">
    <subcellularLocation>
        <location evidence="1">Golgi apparatus membrane</location>
        <topology evidence="1">Single-pass type II membrane protein</topology>
    </subcellularLocation>
</comment>
<comment type="alternative products">
    <event type="alternative splicing"/>
    <isoform>
        <id>Q96FL9-1</id>
        <name>1</name>
        <sequence type="displayed"/>
    </isoform>
    <isoform>
        <id>Q96FL9-2</id>
        <name>2</name>
        <sequence type="described" ref="VSP_011222"/>
    </isoform>
    <isoform>
        <id>Q96FL9-3</id>
        <name>3</name>
        <sequence type="described" ref="VSP_011221"/>
    </isoform>
    <isoform>
        <id>Q96FL9-4</id>
        <name>4</name>
        <sequence type="described" ref="VSP_045121"/>
    </isoform>
</comment>
<comment type="tissue specificity">
    <text evidence="4 5">Detected in renal tubules (at protein level). Highly expressed in fetal and adult kidney. Widely expressed at low level. Weakly expressed in whole brain, cerebellum, thymus, lung, mammary gland, liver, stomach, small intestine, colon, pancreas, spleen, bladder, uterus, placenta, testis, ovary, skeletal muscle, leukocyte, B-cell, bone marrow, fetal brain, fetal thymus, fetal lung, fetal liver, fetal small intestine, fetal spleen, fetal skeletal and fetus. Detected in renal tubules (at protein level).</text>
</comment>
<comment type="domain">
    <text evidence="1">There are two conserved domains in the glycosyltransferase region: the N-terminal domain (domain A, also called GT1 motif), which is probably involved in manganese coordination and substrate binding and the C-terminal domain (domain B, also called Gal/GalNAc-T motif), which is probably involved in catalytic reaction and UDP-Gal binding.</text>
</comment>
<comment type="domain">
    <text evidence="1">The ricin B-type lectin domain binds to GalNAc and contributes to the glycopeptide specificity.</text>
</comment>
<comment type="miscellaneous">
    <molecule>Isoform 1</molecule>
    <text>Major isoform.</text>
</comment>
<comment type="miscellaneous">
    <molecule>Isoform 3</molecule>
    <text evidence="7">Minor isoform.</text>
</comment>
<comment type="similarity">
    <text evidence="7">Belongs to the glycosyltransferase 2 family. GalNAc-T subfamily.</text>
</comment>
<comment type="sequence caution" evidence="7">
    <conflict type="miscellaneous discrepancy">
        <sequence resource="EMBL-CDS" id="BAB14795"/>
    </conflict>
    <text>Chimeric at the C-terminus.</text>
</comment>
<comment type="online information" name="Functional Glycomics Gateway - GTase">
    <link uri="http://www.functionalglycomics.org/glycomics/molecule/jsp/glycoEnzyme/viewGlycoEnzyme.jsp?gbpId=gt_hum_497"/>
    <text>Polypeptide N-acetylgalactosaminyltransferase 14</text>
</comment>
<keyword id="KW-0025">Alternative splicing</keyword>
<keyword id="KW-1015">Disulfide bond</keyword>
<keyword id="KW-0328">Glycosyltransferase</keyword>
<keyword id="KW-0333">Golgi apparatus</keyword>
<keyword id="KW-0430">Lectin</keyword>
<keyword id="KW-0464">Manganese</keyword>
<keyword id="KW-0472">Membrane</keyword>
<keyword id="KW-0479">Metal-binding</keyword>
<keyword id="KW-1267">Proteomics identification</keyword>
<keyword id="KW-1185">Reference proteome</keyword>
<keyword id="KW-0735">Signal-anchor</keyword>
<keyword id="KW-0808">Transferase</keyword>
<keyword id="KW-0812">Transmembrane</keyword>
<keyword id="KW-1133">Transmembrane helix</keyword>
<sequence>MRRLTRRLVLPVFGVLWITVLLFFWVTKRKLEVPTGPEVQTPKPSDADWDDLWDQFDERRYLNAKKWRVGDDPYKLYAFNQRESERISSNRAIPDTRHLRCTLLVYCTDLPPTSIIITFHNEARSTLLRTIRSVLNRTPTHLIREIILVDDFSNDPDDCKQLIKLPKVKCLRNNERQGLVRSRIRGADIAQGTTLTFLDSHCEVNRDWLQPLLHRVKEDYTRVVCPVIDIINLDTFTYIESASELRGGFDWSLHFQWEQLSPEQKARRLDPTEPIRTPIIAGGLFVIDKAWFDYLGKYDMDMDIWGGENFEISFRVWMCGGSLEIVPCSRVGHVFRKKHPYVFPDGNANTYIKNTKRTAEVWMDEYKQYYYAARPFALERPFGNVESRLDLRKNLRCQSFKWYLENIYPELSIPKESSIQKGNIRQRQKCLESQRQNNQETPNLKLSPCAKVKGEDAKSQVWAFTYTQQILQEELCLSVITLFPGAPVVLVLCKNGDDRQQWTKTGSHIEHIASHLCLDTDMFGDGTENGKEIVVNPCESSLMSQHWDMVSS</sequence>
<gene>
    <name type="primary">GALNT14</name>
    <name type="ORF">UNQ2434/PRO4994</name>
</gene>
<feature type="chain" id="PRO_0000059133" description="Polypeptide N-acetylgalactosaminyltransferase 14">
    <location>
        <begin position="1"/>
        <end position="552"/>
    </location>
</feature>
<feature type="topological domain" description="Cytoplasmic" evidence="2">
    <location>
        <begin position="1"/>
        <end position="6"/>
    </location>
</feature>
<feature type="transmembrane region" description="Helical; Signal-anchor for type II membrane protein" evidence="2">
    <location>
        <begin position="7"/>
        <end position="26"/>
    </location>
</feature>
<feature type="topological domain" description="Lumenal" evidence="2">
    <location>
        <begin position="27"/>
        <end position="552"/>
    </location>
</feature>
<feature type="domain" description="Ricin B-type lectin" evidence="3">
    <location>
        <begin position="415"/>
        <end position="550"/>
    </location>
</feature>
<feature type="region of interest" description="Catalytic subdomain A">
    <location>
        <begin position="110"/>
        <end position="215"/>
    </location>
</feature>
<feature type="region of interest" description="Catalytic subdomain B">
    <location>
        <begin position="274"/>
        <end position="336"/>
    </location>
</feature>
<feature type="binding site" evidence="1">
    <location>
        <position position="151"/>
    </location>
    <ligand>
        <name>substrate</name>
    </ligand>
</feature>
<feature type="binding site" evidence="1">
    <location>
        <position position="176"/>
    </location>
    <ligand>
        <name>substrate</name>
    </ligand>
</feature>
<feature type="binding site" evidence="1">
    <location>
        <position position="199"/>
    </location>
    <ligand>
        <name>Mn(2+)</name>
        <dbReference type="ChEBI" id="CHEBI:29035"/>
    </ligand>
</feature>
<feature type="binding site" evidence="1">
    <location>
        <position position="200"/>
    </location>
    <ligand>
        <name>substrate</name>
    </ligand>
</feature>
<feature type="binding site" evidence="1">
    <location>
        <position position="201"/>
    </location>
    <ligand>
        <name>Mn(2+)</name>
        <dbReference type="ChEBI" id="CHEBI:29035"/>
    </ligand>
</feature>
<feature type="binding site" evidence="1">
    <location>
        <position position="305"/>
    </location>
    <ligand>
        <name>substrate</name>
    </ligand>
</feature>
<feature type="binding site" evidence="1">
    <location>
        <position position="333"/>
    </location>
    <ligand>
        <name>Mn(2+)</name>
        <dbReference type="ChEBI" id="CHEBI:29035"/>
    </ligand>
</feature>
<feature type="binding site" evidence="1">
    <location>
        <position position="336"/>
    </location>
    <ligand>
        <name>substrate</name>
    </ligand>
</feature>
<feature type="binding site" evidence="1">
    <location>
        <position position="339"/>
    </location>
    <ligand>
        <name>substrate</name>
    </ligand>
</feature>
<feature type="binding site" evidence="1">
    <location>
        <position position="341"/>
    </location>
    <ligand>
        <name>substrate</name>
    </ligand>
</feature>
<feature type="disulfide bond" evidence="3">
    <location>
        <begin position="101"/>
        <end position="328"/>
    </location>
</feature>
<feature type="disulfide bond" evidence="3">
    <location>
        <begin position="319"/>
        <end position="397"/>
    </location>
</feature>
<feature type="disulfide bond" evidence="3">
    <location>
        <begin position="430"/>
        <end position="449"/>
    </location>
</feature>
<feature type="disulfide bond" evidence="3">
    <location>
        <begin position="476"/>
        <end position="493"/>
    </location>
</feature>
<feature type="disulfide bond" evidence="3">
    <location>
        <begin position="517"/>
        <end position="538"/>
    </location>
</feature>
<feature type="splice variant" id="VSP_045121" description="In isoform 4." evidence="6">
    <original>MRRLTRRLVLPVFGVLWITVLLFFWVTKRKLEVPTGPEVQTPK</original>
    <variation>MSFPMSLARSSVPFADSGLSSSQ</variation>
    <location>
        <begin position="1"/>
        <end position="43"/>
    </location>
</feature>
<feature type="splice variant" id="VSP_011221" description="In isoform 3." evidence="6">
    <original>PSDADWDDLWDQFDERRYLNAKKWRVGDDPYKLYAFNQRESERISSNRAIPDTRHL</original>
    <variation>VWSLFFKVAGMSPWAPQVPVSPTPPYQRGHLPTGGHLAVCHFPCLLQEAQFHLQTQVFLQV</variation>
    <location>
        <begin position="44"/>
        <end position="99"/>
    </location>
</feature>
<feature type="splice variant" id="VSP_011222" description="In isoform 2." evidence="6">
    <location>
        <begin position="100"/>
        <end position="132"/>
    </location>
</feature>
<feature type="sequence variant" id="VAR_033948" description="In dbSNP:rs2288101.">
    <original>Q</original>
    <variation>K</variation>
    <location>
        <position position="469"/>
    </location>
</feature>
<feature type="sequence conflict" description="In Ref. 4; BAB14795." evidence="7" ref="4">
    <original>Q</original>
    <variation>R</variation>
    <location>
        <position position="368"/>
    </location>
</feature>